<dbReference type="EC" id="3.4.21.89" evidence="1"/>
<dbReference type="EMBL" id="AAFW02000124">
    <property type="protein sequence ID" value="EDN61517.1"/>
    <property type="molecule type" value="Genomic_DNA"/>
</dbReference>
<dbReference type="SMR" id="A6ZVU2"/>
<dbReference type="MEROPS" id="S26.010"/>
<dbReference type="GlyCosmos" id="A6ZVU2">
    <property type="glycosylation" value="1 site, No reported glycans"/>
</dbReference>
<dbReference type="HOGENOM" id="CLU_089996_0_0_1"/>
<dbReference type="Proteomes" id="UP000007060">
    <property type="component" value="Unassembled WGS sequence"/>
</dbReference>
<dbReference type="GO" id="GO:0005787">
    <property type="term" value="C:signal peptidase complex"/>
    <property type="evidence" value="ECO:0007669"/>
    <property type="project" value="TreeGrafter"/>
</dbReference>
<dbReference type="GO" id="GO:0004252">
    <property type="term" value="F:serine-type endopeptidase activity"/>
    <property type="evidence" value="ECO:0007669"/>
    <property type="project" value="UniProtKB-EC"/>
</dbReference>
<dbReference type="GO" id="GO:0006465">
    <property type="term" value="P:signal peptide processing"/>
    <property type="evidence" value="ECO:0007669"/>
    <property type="project" value="InterPro"/>
</dbReference>
<dbReference type="CDD" id="cd06462">
    <property type="entry name" value="Peptidase_S24_S26"/>
    <property type="match status" value="1"/>
</dbReference>
<dbReference type="InterPro" id="IPR036286">
    <property type="entry name" value="LexA/Signal_pep-like_sf"/>
</dbReference>
<dbReference type="InterPro" id="IPR019758">
    <property type="entry name" value="Pept_S26A_signal_pept_1_CS"/>
</dbReference>
<dbReference type="InterPro" id="IPR019756">
    <property type="entry name" value="Pept_S26A_signal_pept_1_Ser-AS"/>
</dbReference>
<dbReference type="InterPro" id="IPR015927">
    <property type="entry name" value="Peptidase_S24_S26A/B/C"/>
</dbReference>
<dbReference type="InterPro" id="IPR001733">
    <property type="entry name" value="Peptidase_S26B"/>
</dbReference>
<dbReference type="NCBIfam" id="TIGR02228">
    <property type="entry name" value="sigpep_I_arch"/>
    <property type="match status" value="1"/>
</dbReference>
<dbReference type="PANTHER" id="PTHR10806">
    <property type="entry name" value="SIGNAL PEPTIDASE COMPLEX CATALYTIC SUBUNIT SEC11"/>
    <property type="match status" value="1"/>
</dbReference>
<dbReference type="PANTHER" id="PTHR10806:SF6">
    <property type="entry name" value="SIGNAL PEPTIDASE COMPLEX CATALYTIC SUBUNIT SEC11"/>
    <property type="match status" value="1"/>
</dbReference>
<dbReference type="Pfam" id="PF00717">
    <property type="entry name" value="Peptidase_S24"/>
    <property type="match status" value="1"/>
</dbReference>
<dbReference type="PRINTS" id="PR00728">
    <property type="entry name" value="SIGNALPTASE"/>
</dbReference>
<dbReference type="SUPFAM" id="SSF51306">
    <property type="entry name" value="LexA/Signal peptidase"/>
    <property type="match status" value="1"/>
</dbReference>
<dbReference type="PROSITE" id="PS00501">
    <property type="entry name" value="SPASE_I_1"/>
    <property type="match status" value="1"/>
</dbReference>
<dbReference type="PROSITE" id="PS00761">
    <property type="entry name" value="SPASE_I_3"/>
    <property type="match status" value="1"/>
</dbReference>
<organism>
    <name type="scientific">Saccharomyces cerevisiae (strain YJM789)</name>
    <name type="common">Baker's yeast</name>
    <dbReference type="NCBI Taxonomy" id="307796"/>
    <lineage>
        <taxon>Eukaryota</taxon>
        <taxon>Fungi</taxon>
        <taxon>Dikarya</taxon>
        <taxon>Ascomycota</taxon>
        <taxon>Saccharomycotina</taxon>
        <taxon>Saccharomycetes</taxon>
        <taxon>Saccharomycetales</taxon>
        <taxon>Saccharomycetaceae</taxon>
        <taxon>Saccharomyces</taxon>
    </lineage>
</organism>
<protein>
    <recommendedName>
        <fullName>Signal peptidase complex catalytic subunit SEC11</fullName>
        <ecNumber evidence="1">3.4.21.89</ecNumber>
    </recommendedName>
    <alternativeName>
        <fullName>Secretory protein 11</fullName>
    </alternativeName>
    <alternativeName>
        <fullName>Signal peptidase I</fullName>
    </alternativeName>
</protein>
<keyword id="KW-0256">Endoplasmic reticulum</keyword>
<keyword id="KW-0325">Glycoprotein</keyword>
<keyword id="KW-0378">Hydrolase</keyword>
<keyword id="KW-0472">Membrane</keyword>
<keyword id="KW-0645">Protease</keyword>
<keyword id="KW-0735">Signal-anchor</keyword>
<keyword id="KW-0812">Transmembrane</keyword>
<keyword id="KW-1133">Transmembrane helix</keyword>
<accession>A6ZVU2</accession>
<sequence>MNLRFELQKLLNVCFLFASAYMFWQGLAIATNSASPIVVVLSGSMEPAFQRGDILFLWNRNTFNQVGDVVVYEVEGKQIPIVHRVLRQHNNHADKQFLLTKGDNNAGNDISLYANKKIYLNKSKEIVGTVKGYFPQLGYITIWISENKYAKFALLGMLGLSALLGGE</sequence>
<reference key="1">
    <citation type="journal article" date="2007" name="Proc. Natl. Acad. Sci. U.S.A.">
        <title>Genome sequencing and comparative analysis of Saccharomyces cerevisiae strain YJM789.</title>
        <authorList>
            <person name="Wei W."/>
            <person name="McCusker J.H."/>
            <person name="Hyman R.W."/>
            <person name="Jones T."/>
            <person name="Ning Y."/>
            <person name="Cao Z."/>
            <person name="Gu Z."/>
            <person name="Bruno D."/>
            <person name="Miranda M."/>
            <person name="Nguyen M."/>
            <person name="Wilhelmy J."/>
            <person name="Komp C."/>
            <person name="Tamse R."/>
            <person name="Wang X."/>
            <person name="Jia P."/>
            <person name="Luedi P."/>
            <person name="Oefner P.J."/>
            <person name="David L."/>
            <person name="Dietrich F.S."/>
            <person name="Li Y."/>
            <person name="Davis R.W."/>
            <person name="Steinmetz L.M."/>
        </authorList>
    </citation>
    <scope>NUCLEOTIDE SEQUENCE [LARGE SCALE GENOMIC DNA]</scope>
    <source>
        <strain>YJM789</strain>
    </source>
</reference>
<proteinExistence type="inferred from homology"/>
<name>SEC11_YEAS7</name>
<evidence type="ECO:0000250" key="1">
    <source>
        <dbReference type="UniProtKB" id="P15367"/>
    </source>
</evidence>
<evidence type="ECO:0000250" key="2">
    <source>
        <dbReference type="UniProtKB" id="P67812"/>
    </source>
</evidence>
<evidence type="ECO:0000255" key="3"/>
<evidence type="ECO:0000305" key="4"/>
<gene>
    <name type="primary">SEC11</name>
    <name type="ORF">SCY_2808</name>
</gene>
<feature type="chain" id="PRO_0000412361" description="Signal peptidase complex catalytic subunit SEC11">
    <location>
        <begin position="1"/>
        <end position="167"/>
    </location>
</feature>
<feature type="topological domain" description="Cytoplasmic" evidence="3">
    <location>
        <begin position="1"/>
        <end position="9"/>
    </location>
</feature>
<feature type="transmembrane region" description="Helical; Signal-anchor for type II membrane protein" evidence="3">
    <location>
        <begin position="10"/>
        <end position="30"/>
    </location>
</feature>
<feature type="topological domain" description="Lumenal" evidence="3">
    <location>
        <begin position="31"/>
        <end position="167"/>
    </location>
</feature>
<feature type="region of interest" description="C-terminal short (CTS) helix" evidence="2">
    <location>
        <begin position="153"/>
        <end position="164"/>
    </location>
</feature>
<feature type="active site" description="Charge relay system" evidence="1">
    <location>
        <position position="44"/>
    </location>
</feature>
<feature type="active site" description="Charge relay system" evidence="1">
    <location>
        <position position="83"/>
    </location>
</feature>
<feature type="active site" description="Charge relay system" evidence="1">
    <location>
        <position position="109"/>
    </location>
</feature>
<feature type="glycosylation site" description="N-linked (GlcNAc...) asparagine" evidence="3">
    <location>
        <position position="121"/>
    </location>
</feature>
<comment type="function">
    <text evidence="1 2">Catalytic component of the signal peptidase complex (SPC) which catalyzes the cleavage of N-terminal signal sequences from nascent proteins as they are translocated into the lumen of the endoplasmic reticulum (By similarity). Specifically cleaves N-terminal signal peptides that contain a hydrophobic alpha-helix (h-region) shorter than 18-20 amino acids (By similarity).</text>
</comment>
<comment type="catalytic activity">
    <reaction evidence="1">
        <text>Cleavage of hydrophobic, N-terminal signal or leader sequences from secreted and periplasmic proteins.</text>
        <dbReference type="EC" id="3.4.21.89"/>
    </reaction>
</comment>
<comment type="subunit">
    <text evidence="1 2">Component of the signal peptidase complex (SPC) composed of a catalytic subunit SEC11 and three accessory subunits SPC1, SPC2 and SPC3 (By similarity). The complex induces a local thinning of the ER membrane which is used to measure the length of the signal peptide (SP) h-region of protein substrates. This ensures the selectivity of the complex towards h-regions shorter than 18-20 amino acids (By similarity). SPC associates with the translocon complex (By similarity).</text>
</comment>
<comment type="subcellular location">
    <subcellularLocation>
        <location evidence="1">Endoplasmic reticulum membrane</location>
        <topology evidence="1">Single-pass type II membrane protein</topology>
    </subcellularLocation>
</comment>
<comment type="domain">
    <text evidence="2">The C-terminal short (CTS) helix is essential for catalytic activity. It may be accommodated as a transmembrane helix in the thinned membrane environment of the complex, similarly to the signal peptide in the complex substrates.</text>
</comment>
<comment type="similarity">
    <text evidence="4">Belongs to the peptidase S26B family.</text>
</comment>